<dbReference type="EC" id="2.7.1.39" evidence="1"/>
<dbReference type="EMBL" id="AE006641">
    <property type="protein sequence ID" value="AAK42518.1"/>
    <property type="molecule type" value="Genomic_DNA"/>
</dbReference>
<dbReference type="PIR" id="G90407">
    <property type="entry name" value="G90407"/>
</dbReference>
<dbReference type="RefSeq" id="WP_009989478.1">
    <property type="nucleotide sequence ID" value="NC_002754.1"/>
</dbReference>
<dbReference type="SMR" id="Q97W70"/>
<dbReference type="FunCoup" id="Q97W70">
    <property type="interactions" value="209"/>
</dbReference>
<dbReference type="STRING" id="273057.SSO2367"/>
<dbReference type="PaxDb" id="273057-SSO2367"/>
<dbReference type="EnsemblBacteria" id="AAK42518">
    <property type="protein sequence ID" value="AAK42518"/>
    <property type="gene ID" value="SSO2367"/>
</dbReference>
<dbReference type="KEGG" id="sso:SSO2367"/>
<dbReference type="PATRIC" id="fig|273057.12.peg.2452"/>
<dbReference type="eggNOG" id="arCOG01027">
    <property type="taxonomic scope" value="Archaea"/>
</dbReference>
<dbReference type="HOGENOM" id="CLU_041243_1_1_2"/>
<dbReference type="InParanoid" id="Q97W70"/>
<dbReference type="PhylomeDB" id="Q97W70"/>
<dbReference type="UniPathway" id="UPA00050">
    <property type="reaction ID" value="UER00064"/>
</dbReference>
<dbReference type="Proteomes" id="UP000001974">
    <property type="component" value="Chromosome"/>
</dbReference>
<dbReference type="GO" id="GO:0005737">
    <property type="term" value="C:cytoplasm"/>
    <property type="evidence" value="ECO:0007669"/>
    <property type="project" value="UniProtKB-SubCell"/>
</dbReference>
<dbReference type="GO" id="GO:0005524">
    <property type="term" value="F:ATP binding"/>
    <property type="evidence" value="ECO:0007669"/>
    <property type="project" value="UniProtKB-UniRule"/>
</dbReference>
<dbReference type="GO" id="GO:0004413">
    <property type="term" value="F:homoserine kinase activity"/>
    <property type="evidence" value="ECO:0007669"/>
    <property type="project" value="UniProtKB-UniRule"/>
</dbReference>
<dbReference type="GO" id="GO:0009088">
    <property type="term" value="P:threonine biosynthetic process"/>
    <property type="evidence" value="ECO:0007669"/>
    <property type="project" value="UniProtKB-UniRule"/>
</dbReference>
<dbReference type="Gene3D" id="3.30.230.10">
    <property type="match status" value="1"/>
</dbReference>
<dbReference type="Gene3D" id="3.30.70.890">
    <property type="entry name" value="GHMP kinase, C-terminal domain"/>
    <property type="match status" value="1"/>
</dbReference>
<dbReference type="HAMAP" id="MF_00384">
    <property type="entry name" value="Homoser_kinase"/>
    <property type="match status" value="1"/>
</dbReference>
<dbReference type="InterPro" id="IPR013750">
    <property type="entry name" value="GHMP_kinase_C_dom"/>
</dbReference>
<dbReference type="InterPro" id="IPR036554">
    <property type="entry name" value="GHMP_kinase_C_sf"/>
</dbReference>
<dbReference type="InterPro" id="IPR006204">
    <property type="entry name" value="GHMP_kinase_N_dom"/>
</dbReference>
<dbReference type="InterPro" id="IPR006203">
    <property type="entry name" value="GHMP_knse_ATP-bd_CS"/>
</dbReference>
<dbReference type="InterPro" id="IPR000870">
    <property type="entry name" value="Homoserine_kinase"/>
</dbReference>
<dbReference type="InterPro" id="IPR020568">
    <property type="entry name" value="Ribosomal_Su5_D2-typ_SF"/>
</dbReference>
<dbReference type="InterPro" id="IPR014721">
    <property type="entry name" value="Ribsml_uS5_D2-typ_fold_subgr"/>
</dbReference>
<dbReference type="NCBIfam" id="NF002288">
    <property type="entry name" value="PRK01212.1-4"/>
    <property type="match status" value="1"/>
</dbReference>
<dbReference type="NCBIfam" id="TIGR00191">
    <property type="entry name" value="thrB"/>
    <property type="match status" value="1"/>
</dbReference>
<dbReference type="PANTHER" id="PTHR20861:SF1">
    <property type="entry name" value="HOMOSERINE KINASE"/>
    <property type="match status" value="1"/>
</dbReference>
<dbReference type="PANTHER" id="PTHR20861">
    <property type="entry name" value="HOMOSERINE/4-DIPHOSPHOCYTIDYL-2-C-METHYL-D-ERYTHRITOL KINASE"/>
    <property type="match status" value="1"/>
</dbReference>
<dbReference type="Pfam" id="PF08544">
    <property type="entry name" value="GHMP_kinases_C"/>
    <property type="match status" value="1"/>
</dbReference>
<dbReference type="Pfam" id="PF00288">
    <property type="entry name" value="GHMP_kinases_N"/>
    <property type="match status" value="1"/>
</dbReference>
<dbReference type="PIRSF" id="PIRSF000676">
    <property type="entry name" value="Homoser_kin"/>
    <property type="match status" value="1"/>
</dbReference>
<dbReference type="PRINTS" id="PR00958">
    <property type="entry name" value="HOMSERKINASE"/>
</dbReference>
<dbReference type="SUPFAM" id="SSF55060">
    <property type="entry name" value="GHMP Kinase, C-terminal domain"/>
    <property type="match status" value="1"/>
</dbReference>
<dbReference type="SUPFAM" id="SSF54211">
    <property type="entry name" value="Ribosomal protein S5 domain 2-like"/>
    <property type="match status" value="1"/>
</dbReference>
<dbReference type="PROSITE" id="PS00627">
    <property type="entry name" value="GHMP_KINASES_ATP"/>
    <property type="match status" value="1"/>
</dbReference>
<organism>
    <name type="scientific">Saccharolobus solfataricus (strain ATCC 35092 / DSM 1617 / JCM 11322 / P2)</name>
    <name type="common">Sulfolobus solfataricus</name>
    <dbReference type="NCBI Taxonomy" id="273057"/>
    <lineage>
        <taxon>Archaea</taxon>
        <taxon>Thermoproteota</taxon>
        <taxon>Thermoprotei</taxon>
        <taxon>Sulfolobales</taxon>
        <taxon>Sulfolobaceae</taxon>
        <taxon>Saccharolobus</taxon>
    </lineage>
</organism>
<accession>Q97W70</accession>
<comment type="function">
    <text evidence="1">Catalyzes the ATP-dependent phosphorylation of L-homoserine to L-homoserine phosphate.</text>
</comment>
<comment type="catalytic activity">
    <reaction evidence="1">
        <text>L-homoserine + ATP = O-phospho-L-homoserine + ADP + H(+)</text>
        <dbReference type="Rhea" id="RHEA:13985"/>
        <dbReference type="ChEBI" id="CHEBI:15378"/>
        <dbReference type="ChEBI" id="CHEBI:30616"/>
        <dbReference type="ChEBI" id="CHEBI:57476"/>
        <dbReference type="ChEBI" id="CHEBI:57590"/>
        <dbReference type="ChEBI" id="CHEBI:456216"/>
        <dbReference type="EC" id="2.7.1.39"/>
    </reaction>
</comment>
<comment type="pathway">
    <text evidence="1">Amino-acid biosynthesis; L-threonine biosynthesis; L-threonine from L-aspartate: step 4/5.</text>
</comment>
<comment type="subcellular location">
    <subcellularLocation>
        <location evidence="1">Cytoplasm</location>
    </subcellularLocation>
</comment>
<comment type="similarity">
    <text evidence="1">Belongs to the GHMP kinase family. Homoserine kinase subfamily.</text>
</comment>
<sequence>MECKRARAYSSSANLGSGFDILSIAHTAFFDTVEICVENKNLNNIIVESNSKIPLEPNKNSATYPIVKIMEEIGIKASLKVRVIKGIPEGLGLGSSGASAAAAVMAFNNLFNLNLSKEDLVRYAMYGEIASSGSPHPDNVAASVFGGVVSVVSVSPVKVVEIPINYSFDILLFTPLNVHIEEKTKKAREMVPKTVTLSDYINNSRYISSLLLGFIKGERELIRLGLNDKIVEKARLPLFPYYPKIKEVAIKYDAIGACVSGAGPSILVLTDKMTDENKIVEEGTKTCNEFNVECKVIKAKIAGGVGIEGRD</sequence>
<proteinExistence type="inferred from homology"/>
<name>KHSE_SACS2</name>
<gene>
    <name evidence="1" type="primary">thrB</name>
    <name type="ordered locus">SSO2367</name>
</gene>
<evidence type="ECO:0000255" key="1">
    <source>
        <dbReference type="HAMAP-Rule" id="MF_00384"/>
    </source>
</evidence>
<reference key="1">
    <citation type="journal article" date="2001" name="Proc. Natl. Acad. Sci. U.S.A.">
        <title>The complete genome of the crenarchaeon Sulfolobus solfataricus P2.</title>
        <authorList>
            <person name="She Q."/>
            <person name="Singh R.K."/>
            <person name="Confalonieri F."/>
            <person name="Zivanovic Y."/>
            <person name="Allard G."/>
            <person name="Awayez M.J."/>
            <person name="Chan-Weiher C.C.-Y."/>
            <person name="Clausen I.G."/>
            <person name="Curtis B.A."/>
            <person name="De Moors A."/>
            <person name="Erauso G."/>
            <person name="Fletcher C."/>
            <person name="Gordon P.M.K."/>
            <person name="Heikamp-de Jong I."/>
            <person name="Jeffries A.C."/>
            <person name="Kozera C.J."/>
            <person name="Medina N."/>
            <person name="Peng X."/>
            <person name="Thi-Ngoc H.P."/>
            <person name="Redder P."/>
            <person name="Schenk M.E."/>
            <person name="Theriault C."/>
            <person name="Tolstrup N."/>
            <person name="Charlebois R.L."/>
            <person name="Doolittle W.F."/>
            <person name="Duguet M."/>
            <person name="Gaasterland T."/>
            <person name="Garrett R.A."/>
            <person name="Ragan M.A."/>
            <person name="Sensen C.W."/>
            <person name="Van der Oost J."/>
        </authorList>
    </citation>
    <scope>NUCLEOTIDE SEQUENCE [LARGE SCALE GENOMIC DNA]</scope>
    <source>
        <strain>ATCC 35092 / DSM 1617 / JCM 11322 / P2</strain>
    </source>
</reference>
<protein>
    <recommendedName>
        <fullName evidence="1">Homoserine kinase</fullName>
        <shortName evidence="1">HK</shortName>
        <shortName evidence="1">HSK</shortName>
        <ecNumber evidence="1">2.7.1.39</ecNumber>
    </recommendedName>
</protein>
<keyword id="KW-0028">Amino-acid biosynthesis</keyword>
<keyword id="KW-0067">ATP-binding</keyword>
<keyword id="KW-0963">Cytoplasm</keyword>
<keyword id="KW-0418">Kinase</keyword>
<keyword id="KW-0547">Nucleotide-binding</keyword>
<keyword id="KW-1185">Reference proteome</keyword>
<keyword id="KW-0791">Threonine biosynthesis</keyword>
<keyword id="KW-0808">Transferase</keyword>
<feature type="chain" id="PRO_0000156650" description="Homoserine kinase">
    <location>
        <begin position="1"/>
        <end position="311"/>
    </location>
</feature>
<feature type="binding site" evidence="1">
    <location>
        <begin position="88"/>
        <end position="98"/>
    </location>
    <ligand>
        <name>ATP</name>
        <dbReference type="ChEBI" id="CHEBI:30616"/>
    </ligand>
</feature>